<organism>
    <name type="scientific">Baumannia cicadellinicola subsp. Homalodisca coagulata</name>
    <dbReference type="NCBI Taxonomy" id="374463"/>
    <lineage>
        <taxon>Bacteria</taxon>
        <taxon>Pseudomonadati</taxon>
        <taxon>Pseudomonadota</taxon>
        <taxon>Gammaproteobacteria</taxon>
        <taxon>Candidatus Palibaumannia</taxon>
    </lineage>
</organism>
<name>GLO2_BAUCH</name>
<dbReference type="EC" id="3.1.2.6" evidence="1"/>
<dbReference type="EMBL" id="CP000238">
    <property type="protein sequence ID" value="ABF14337.1"/>
    <property type="molecule type" value="Genomic_DNA"/>
</dbReference>
<dbReference type="RefSeq" id="WP_011520646.1">
    <property type="nucleotide sequence ID" value="NC_007984.1"/>
</dbReference>
<dbReference type="SMR" id="Q1LT01"/>
<dbReference type="STRING" id="374463.BCI_0475"/>
<dbReference type="KEGG" id="bci:BCI_0475"/>
<dbReference type="HOGENOM" id="CLU_030571_4_1_6"/>
<dbReference type="OrthoDB" id="9802248at2"/>
<dbReference type="UniPathway" id="UPA00619">
    <property type="reaction ID" value="UER00676"/>
</dbReference>
<dbReference type="Proteomes" id="UP000002427">
    <property type="component" value="Chromosome"/>
</dbReference>
<dbReference type="GO" id="GO:0004416">
    <property type="term" value="F:hydroxyacylglutathione hydrolase activity"/>
    <property type="evidence" value="ECO:0007669"/>
    <property type="project" value="UniProtKB-UniRule"/>
</dbReference>
<dbReference type="GO" id="GO:0046872">
    <property type="term" value="F:metal ion binding"/>
    <property type="evidence" value="ECO:0007669"/>
    <property type="project" value="UniProtKB-KW"/>
</dbReference>
<dbReference type="GO" id="GO:0019243">
    <property type="term" value="P:methylglyoxal catabolic process to D-lactate via S-lactoyl-glutathione"/>
    <property type="evidence" value="ECO:0007669"/>
    <property type="project" value="InterPro"/>
</dbReference>
<dbReference type="CDD" id="cd07723">
    <property type="entry name" value="hydroxyacylglutathione_hydrolase_MBL-fold"/>
    <property type="match status" value="1"/>
</dbReference>
<dbReference type="Gene3D" id="3.60.15.10">
    <property type="entry name" value="Ribonuclease Z/Hydroxyacylglutathione hydrolase-like"/>
    <property type="match status" value="1"/>
</dbReference>
<dbReference type="HAMAP" id="MF_01374">
    <property type="entry name" value="Glyoxalase_2"/>
    <property type="match status" value="1"/>
</dbReference>
<dbReference type="InterPro" id="IPR035680">
    <property type="entry name" value="Clx_II_MBL"/>
</dbReference>
<dbReference type="InterPro" id="IPR050110">
    <property type="entry name" value="Glyoxalase_II_hydrolase"/>
</dbReference>
<dbReference type="InterPro" id="IPR032282">
    <property type="entry name" value="HAGH_C"/>
</dbReference>
<dbReference type="InterPro" id="IPR017782">
    <property type="entry name" value="Hydroxyacylglutathione_Hdrlase"/>
</dbReference>
<dbReference type="InterPro" id="IPR001279">
    <property type="entry name" value="Metallo-B-lactamas"/>
</dbReference>
<dbReference type="InterPro" id="IPR036866">
    <property type="entry name" value="RibonucZ/Hydroxyglut_hydro"/>
</dbReference>
<dbReference type="NCBIfam" id="TIGR03413">
    <property type="entry name" value="GSH_gloB"/>
    <property type="match status" value="1"/>
</dbReference>
<dbReference type="PANTHER" id="PTHR43705">
    <property type="entry name" value="HYDROXYACYLGLUTATHIONE HYDROLASE"/>
    <property type="match status" value="1"/>
</dbReference>
<dbReference type="PANTHER" id="PTHR43705:SF1">
    <property type="entry name" value="HYDROXYACYLGLUTATHIONE HYDROLASE GLOB"/>
    <property type="match status" value="1"/>
</dbReference>
<dbReference type="Pfam" id="PF16123">
    <property type="entry name" value="HAGH_C"/>
    <property type="match status" value="1"/>
</dbReference>
<dbReference type="Pfam" id="PF00753">
    <property type="entry name" value="Lactamase_B"/>
    <property type="match status" value="1"/>
</dbReference>
<dbReference type="PIRSF" id="PIRSF005457">
    <property type="entry name" value="Glx"/>
    <property type="match status" value="1"/>
</dbReference>
<dbReference type="SMART" id="SM00849">
    <property type="entry name" value="Lactamase_B"/>
    <property type="match status" value="1"/>
</dbReference>
<dbReference type="SUPFAM" id="SSF56281">
    <property type="entry name" value="Metallo-hydrolase/oxidoreductase"/>
    <property type="match status" value="1"/>
</dbReference>
<evidence type="ECO:0000255" key="1">
    <source>
        <dbReference type="HAMAP-Rule" id="MF_01374"/>
    </source>
</evidence>
<keyword id="KW-0378">Hydrolase</keyword>
<keyword id="KW-0479">Metal-binding</keyword>
<keyword id="KW-1185">Reference proteome</keyword>
<keyword id="KW-0862">Zinc</keyword>
<sequence length="257" mass="29407">MNLIAIPALIDNYIWLLHNKKGECLIVDPGDATPVLHILSNYQLKLTSILLTHHHPDHVKGVKLLSQYFPVTIYGPQETFKQCANIIVKKGDFLVLLEKKFAVLSFPGHTLGHIGFYSYPWLFCGDTVFSAGCGRIFEGTTKQMYESFQEVNQLSSHTLICCAHEYTLTNLAFASSLLPKDRIISSYQRHVTILRNKKKPSLPTKLSLERLINPFFRCHDINLHQAINFSPLLGCEWLVFDYLRQKRDNFRGNSSQK</sequence>
<protein>
    <recommendedName>
        <fullName evidence="1">Hydroxyacylglutathione hydrolase</fullName>
        <ecNumber evidence="1">3.1.2.6</ecNumber>
    </recommendedName>
    <alternativeName>
        <fullName evidence="1">Glyoxalase II</fullName>
        <shortName evidence="1">Glx II</shortName>
    </alternativeName>
</protein>
<gene>
    <name evidence="1" type="primary">gloB</name>
    <name type="ordered locus">BCI_0475</name>
</gene>
<comment type="function">
    <text evidence="1">Thiolesterase that catalyzes the hydrolysis of S-D-lactoyl-glutathione to form glutathione and D-lactic acid.</text>
</comment>
<comment type="catalytic activity">
    <reaction evidence="1">
        <text>an S-(2-hydroxyacyl)glutathione + H2O = a 2-hydroxy carboxylate + glutathione + H(+)</text>
        <dbReference type="Rhea" id="RHEA:21864"/>
        <dbReference type="ChEBI" id="CHEBI:15377"/>
        <dbReference type="ChEBI" id="CHEBI:15378"/>
        <dbReference type="ChEBI" id="CHEBI:57925"/>
        <dbReference type="ChEBI" id="CHEBI:58896"/>
        <dbReference type="ChEBI" id="CHEBI:71261"/>
        <dbReference type="EC" id="3.1.2.6"/>
    </reaction>
</comment>
<comment type="cofactor">
    <cofactor evidence="1">
        <name>Zn(2+)</name>
        <dbReference type="ChEBI" id="CHEBI:29105"/>
    </cofactor>
    <text evidence="1">Binds 2 Zn(2+) ions per subunit.</text>
</comment>
<comment type="pathway">
    <text evidence="1">Secondary metabolite metabolism; methylglyoxal degradation; (R)-lactate from methylglyoxal: step 2/2.</text>
</comment>
<comment type="subunit">
    <text evidence="1">Monomer.</text>
</comment>
<comment type="similarity">
    <text evidence="1">Belongs to the metallo-beta-lactamase superfamily. Glyoxalase II family.</text>
</comment>
<feature type="chain" id="PRO_0000309625" description="Hydroxyacylglutathione hydrolase">
    <location>
        <begin position="1"/>
        <end position="257"/>
    </location>
</feature>
<feature type="binding site" evidence="1">
    <location>
        <position position="53"/>
    </location>
    <ligand>
        <name>Zn(2+)</name>
        <dbReference type="ChEBI" id="CHEBI:29105"/>
        <label>1</label>
    </ligand>
</feature>
<feature type="binding site" evidence="1">
    <location>
        <position position="55"/>
    </location>
    <ligand>
        <name>Zn(2+)</name>
        <dbReference type="ChEBI" id="CHEBI:29105"/>
        <label>1</label>
    </ligand>
</feature>
<feature type="binding site" evidence="1">
    <location>
        <position position="57"/>
    </location>
    <ligand>
        <name>Zn(2+)</name>
        <dbReference type="ChEBI" id="CHEBI:29105"/>
        <label>2</label>
    </ligand>
</feature>
<feature type="binding site" evidence="1">
    <location>
        <position position="58"/>
    </location>
    <ligand>
        <name>Zn(2+)</name>
        <dbReference type="ChEBI" id="CHEBI:29105"/>
        <label>2</label>
    </ligand>
</feature>
<feature type="binding site" evidence="1">
    <location>
        <position position="109"/>
    </location>
    <ligand>
        <name>Zn(2+)</name>
        <dbReference type="ChEBI" id="CHEBI:29105"/>
        <label>1</label>
    </ligand>
</feature>
<feature type="binding site" evidence="1">
    <location>
        <position position="126"/>
    </location>
    <ligand>
        <name>Zn(2+)</name>
        <dbReference type="ChEBI" id="CHEBI:29105"/>
        <label>1</label>
    </ligand>
</feature>
<feature type="binding site" evidence="1">
    <location>
        <position position="126"/>
    </location>
    <ligand>
        <name>Zn(2+)</name>
        <dbReference type="ChEBI" id="CHEBI:29105"/>
        <label>2</label>
    </ligand>
</feature>
<feature type="binding site" evidence="1">
    <location>
        <position position="164"/>
    </location>
    <ligand>
        <name>Zn(2+)</name>
        <dbReference type="ChEBI" id="CHEBI:29105"/>
        <label>2</label>
    </ligand>
</feature>
<reference key="1">
    <citation type="journal article" date="2006" name="PLoS Biol.">
        <title>Metabolic complementarity and genomics of the dual bacterial symbiosis of sharpshooters.</title>
        <authorList>
            <person name="Wu D."/>
            <person name="Daugherty S.C."/>
            <person name="Van Aken S.E."/>
            <person name="Pai G.H."/>
            <person name="Watkins K.L."/>
            <person name="Khouri H."/>
            <person name="Tallon L.J."/>
            <person name="Zaborsky J.M."/>
            <person name="Dunbar H.E."/>
            <person name="Tran P.L."/>
            <person name="Moran N.A."/>
            <person name="Eisen J.A."/>
        </authorList>
    </citation>
    <scope>NUCLEOTIDE SEQUENCE [LARGE SCALE GENOMIC DNA]</scope>
</reference>
<accession>Q1LT01</accession>
<proteinExistence type="inferred from homology"/>